<accession>A3N2P2</accession>
<comment type="function">
    <text evidence="1">Catalyzes the transfer of endogenously produced octanoic acid from octanoyl-acyl-carrier-protein onto the lipoyl domains of lipoate-dependent enzymes. Lipoyl-ACP can also act as a substrate although octanoyl-ACP is likely to be the physiological substrate.</text>
</comment>
<comment type="catalytic activity">
    <reaction evidence="1">
        <text>octanoyl-[ACP] + L-lysyl-[protein] = N(6)-octanoyl-L-lysyl-[protein] + holo-[ACP] + H(+)</text>
        <dbReference type="Rhea" id="RHEA:17665"/>
        <dbReference type="Rhea" id="RHEA-COMP:9636"/>
        <dbReference type="Rhea" id="RHEA-COMP:9685"/>
        <dbReference type="Rhea" id="RHEA-COMP:9752"/>
        <dbReference type="Rhea" id="RHEA-COMP:9928"/>
        <dbReference type="ChEBI" id="CHEBI:15378"/>
        <dbReference type="ChEBI" id="CHEBI:29969"/>
        <dbReference type="ChEBI" id="CHEBI:64479"/>
        <dbReference type="ChEBI" id="CHEBI:78463"/>
        <dbReference type="ChEBI" id="CHEBI:78809"/>
        <dbReference type="EC" id="2.3.1.181"/>
    </reaction>
</comment>
<comment type="pathway">
    <text evidence="1">Protein modification; protein lipoylation via endogenous pathway; protein N(6)-(lipoyl)lysine from octanoyl-[acyl-carrier-protein]: step 1/2.</text>
</comment>
<comment type="subcellular location">
    <subcellularLocation>
        <location evidence="1">Cytoplasm</location>
    </subcellularLocation>
</comment>
<comment type="miscellaneous">
    <text evidence="1">In the reaction, the free carboxyl group of octanoic acid is attached via an amide linkage to the epsilon-amino group of a specific lysine residue of lipoyl domains of lipoate-dependent enzymes.</text>
</comment>
<comment type="similarity">
    <text evidence="1">Belongs to the LipB family.</text>
</comment>
<dbReference type="EC" id="2.3.1.181" evidence="1"/>
<dbReference type="EMBL" id="CP000569">
    <property type="protein sequence ID" value="ABN74678.1"/>
    <property type="molecule type" value="Genomic_DNA"/>
</dbReference>
<dbReference type="RefSeq" id="WP_005598951.1">
    <property type="nucleotide sequence ID" value="NC_009053.1"/>
</dbReference>
<dbReference type="SMR" id="A3N2P2"/>
<dbReference type="STRING" id="416269.APL_1594"/>
<dbReference type="EnsemblBacteria" id="ABN74678">
    <property type="protein sequence ID" value="ABN74678"/>
    <property type="gene ID" value="APL_1594"/>
</dbReference>
<dbReference type="GeneID" id="48599880"/>
<dbReference type="KEGG" id="apl:APL_1594"/>
<dbReference type="eggNOG" id="COG0321">
    <property type="taxonomic scope" value="Bacteria"/>
</dbReference>
<dbReference type="HOGENOM" id="CLU_035168_3_1_6"/>
<dbReference type="UniPathway" id="UPA00538">
    <property type="reaction ID" value="UER00592"/>
</dbReference>
<dbReference type="Proteomes" id="UP000001432">
    <property type="component" value="Chromosome"/>
</dbReference>
<dbReference type="GO" id="GO:0005737">
    <property type="term" value="C:cytoplasm"/>
    <property type="evidence" value="ECO:0007669"/>
    <property type="project" value="UniProtKB-SubCell"/>
</dbReference>
<dbReference type="GO" id="GO:0033819">
    <property type="term" value="F:lipoyl(octanoyl) transferase activity"/>
    <property type="evidence" value="ECO:0007669"/>
    <property type="project" value="UniProtKB-EC"/>
</dbReference>
<dbReference type="GO" id="GO:0036211">
    <property type="term" value="P:protein modification process"/>
    <property type="evidence" value="ECO:0007669"/>
    <property type="project" value="InterPro"/>
</dbReference>
<dbReference type="CDD" id="cd16444">
    <property type="entry name" value="LipB"/>
    <property type="match status" value="1"/>
</dbReference>
<dbReference type="FunFam" id="3.30.930.10:FF:000020">
    <property type="entry name" value="Octanoyltransferase"/>
    <property type="match status" value="1"/>
</dbReference>
<dbReference type="Gene3D" id="3.30.930.10">
    <property type="entry name" value="Bira Bifunctional Protein, Domain 2"/>
    <property type="match status" value="1"/>
</dbReference>
<dbReference type="HAMAP" id="MF_00013">
    <property type="entry name" value="LipB"/>
    <property type="match status" value="1"/>
</dbReference>
<dbReference type="InterPro" id="IPR045864">
    <property type="entry name" value="aa-tRNA-synth_II/BPL/LPL"/>
</dbReference>
<dbReference type="InterPro" id="IPR004143">
    <property type="entry name" value="BPL_LPL_catalytic"/>
</dbReference>
<dbReference type="InterPro" id="IPR000544">
    <property type="entry name" value="Octanoyltransferase"/>
</dbReference>
<dbReference type="InterPro" id="IPR020605">
    <property type="entry name" value="Octanoyltransferase_CS"/>
</dbReference>
<dbReference type="NCBIfam" id="TIGR00214">
    <property type="entry name" value="lipB"/>
    <property type="match status" value="1"/>
</dbReference>
<dbReference type="NCBIfam" id="NF010922">
    <property type="entry name" value="PRK14342.1"/>
    <property type="match status" value="1"/>
</dbReference>
<dbReference type="PANTHER" id="PTHR10993:SF7">
    <property type="entry name" value="LIPOYLTRANSFERASE 2, MITOCHONDRIAL-RELATED"/>
    <property type="match status" value="1"/>
</dbReference>
<dbReference type="PANTHER" id="PTHR10993">
    <property type="entry name" value="OCTANOYLTRANSFERASE"/>
    <property type="match status" value="1"/>
</dbReference>
<dbReference type="Pfam" id="PF21948">
    <property type="entry name" value="LplA-B_cat"/>
    <property type="match status" value="1"/>
</dbReference>
<dbReference type="PIRSF" id="PIRSF016262">
    <property type="entry name" value="LPLase"/>
    <property type="match status" value="1"/>
</dbReference>
<dbReference type="SUPFAM" id="SSF55681">
    <property type="entry name" value="Class II aaRS and biotin synthetases"/>
    <property type="match status" value="1"/>
</dbReference>
<dbReference type="PROSITE" id="PS51733">
    <property type="entry name" value="BPL_LPL_CATALYTIC"/>
    <property type="match status" value="1"/>
</dbReference>
<dbReference type="PROSITE" id="PS01313">
    <property type="entry name" value="LIPB"/>
    <property type="match status" value="1"/>
</dbReference>
<protein>
    <recommendedName>
        <fullName evidence="1">Octanoyltransferase</fullName>
        <ecNumber evidence="1">2.3.1.181</ecNumber>
    </recommendedName>
    <alternativeName>
        <fullName evidence="1">Lipoate-protein ligase B</fullName>
    </alternativeName>
    <alternativeName>
        <fullName evidence="1">Lipoyl/octanoyl transferase</fullName>
    </alternativeName>
    <alternativeName>
        <fullName evidence="1">Octanoyl-[acyl-carrier-protein]-protein N-octanoyltransferase</fullName>
    </alternativeName>
</protein>
<reference key="1">
    <citation type="journal article" date="2008" name="J. Bacteriol.">
        <title>The complete genome sequence of Actinobacillus pleuropneumoniae L20 (serotype 5b).</title>
        <authorList>
            <person name="Foote S.J."/>
            <person name="Bosse J.T."/>
            <person name="Bouevitch A.B."/>
            <person name="Langford P.R."/>
            <person name="Young N.M."/>
            <person name="Nash J.H.E."/>
        </authorList>
    </citation>
    <scope>NUCLEOTIDE SEQUENCE [LARGE SCALE GENOMIC DNA]</scope>
    <source>
        <strain>L20</strain>
    </source>
</reference>
<keyword id="KW-0012">Acyltransferase</keyword>
<keyword id="KW-0963">Cytoplasm</keyword>
<keyword id="KW-1185">Reference proteome</keyword>
<keyword id="KW-0808">Transferase</keyword>
<gene>
    <name evidence="1" type="primary">lipB</name>
    <name type="ordered locus">APL_1594</name>
</gene>
<proteinExistence type="inferred from homology"/>
<sequence>MNQLIVRQLGVQPYEEIWHQMQDFTDNRNENTADEIWLVQHPSVFTQGSAGKPEHLLNPTNIPVVQTDRGGQITYHGEGQQVMYVLIDIKRLKAQGKDVSVRDLVTALEQCVVKTLADYGIEGYPKPDAPGVYINGKKICSLGLRIRQGRSFHGLAFNVNMDLTPFRNINPCGYAGLEMTQLKDYIAESEAQCDLVSPKLVAHFYNILGYNAQQIINK</sequence>
<evidence type="ECO:0000255" key="1">
    <source>
        <dbReference type="HAMAP-Rule" id="MF_00013"/>
    </source>
</evidence>
<evidence type="ECO:0000255" key="2">
    <source>
        <dbReference type="PROSITE-ProRule" id="PRU01067"/>
    </source>
</evidence>
<organism>
    <name type="scientific">Actinobacillus pleuropneumoniae serotype 5b (strain L20)</name>
    <dbReference type="NCBI Taxonomy" id="416269"/>
    <lineage>
        <taxon>Bacteria</taxon>
        <taxon>Pseudomonadati</taxon>
        <taxon>Pseudomonadota</taxon>
        <taxon>Gammaproteobacteria</taxon>
        <taxon>Pasteurellales</taxon>
        <taxon>Pasteurellaceae</taxon>
        <taxon>Actinobacillus</taxon>
    </lineage>
</organism>
<name>LIPB_ACTP2</name>
<feature type="chain" id="PRO_0000321618" description="Octanoyltransferase">
    <location>
        <begin position="1"/>
        <end position="218"/>
    </location>
</feature>
<feature type="domain" description="BPL/LPL catalytic" evidence="2">
    <location>
        <begin position="30"/>
        <end position="212"/>
    </location>
</feature>
<feature type="active site" description="Acyl-thioester intermediate" evidence="1">
    <location>
        <position position="172"/>
    </location>
</feature>
<feature type="binding site" evidence="1">
    <location>
        <begin position="69"/>
        <end position="76"/>
    </location>
    <ligand>
        <name>substrate</name>
    </ligand>
</feature>
<feature type="binding site" evidence="1">
    <location>
        <begin position="141"/>
        <end position="143"/>
    </location>
    <ligand>
        <name>substrate</name>
    </ligand>
</feature>
<feature type="binding site" evidence="1">
    <location>
        <begin position="154"/>
        <end position="156"/>
    </location>
    <ligand>
        <name>substrate</name>
    </ligand>
</feature>
<feature type="site" description="Lowers pKa of active site Cys" evidence="1">
    <location>
        <position position="138"/>
    </location>
</feature>